<keyword id="KW-1185">Reference proteome</keyword>
<keyword id="KW-0687">Ribonucleoprotein</keyword>
<keyword id="KW-0689">Ribosomal protein</keyword>
<comment type="similarity">
    <text evidence="1">Belongs to the bacterial ribosomal protein bL36 family.</text>
</comment>
<dbReference type="EMBL" id="AE004969">
    <property type="protein sequence ID" value="AAW89627.1"/>
    <property type="molecule type" value="Genomic_DNA"/>
</dbReference>
<dbReference type="RefSeq" id="YP_208039.1">
    <property type="nucleotide sequence ID" value="NC_002946.2"/>
</dbReference>
<dbReference type="SMR" id="Q5F860"/>
<dbReference type="STRING" id="242231.NGO_0931"/>
<dbReference type="KEGG" id="ngo:NGO_0931"/>
<dbReference type="PATRIC" id="fig|242231.10.peg.1092"/>
<dbReference type="HOGENOM" id="CLU_135723_3_3_4"/>
<dbReference type="Proteomes" id="UP000000535">
    <property type="component" value="Chromosome"/>
</dbReference>
<dbReference type="GO" id="GO:1990904">
    <property type="term" value="C:ribonucleoprotein complex"/>
    <property type="evidence" value="ECO:0007669"/>
    <property type="project" value="UniProtKB-KW"/>
</dbReference>
<dbReference type="GO" id="GO:0005840">
    <property type="term" value="C:ribosome"/>
    <property type="evidence" value="ECO:0007669"/>
    <property type="project" value="UniProtKB-KW"/>
</dbReference>
<dbReference type="GO" id="GO:0003735">
    <property type="term" value="F:structural constituent of ribosome"/>
    <property type="evidence" value="ECO:0007669"/>
    <property type="project" value="InterPro"/>
</dbReference>
<dbReference type="GO" id="GO:0006412">
    <property type="term" value="P:translation"/>
    <property type="evidence" value="ECO:0007669"/>
    <property type="project" value="UniProtKB-UniRule"/>
</dbReference>
<dbReference type="HAMAP" id="MF_00251">
    <property type="entry name" value="Ribosomal_bL36"/>
    <property type="match status" value="1"/>
</dbReference>
<dbReference type="InterPro" id="IPR000473">
    <property type="entry name" value="Ribosomal_bL36"/>
</dbReference>
<dbReference type="InterPro" id="IPR035977">
    <property type="entry name" value="Ribosomal_bL36_sp"/>
</dbReference>
<dbReference type="InterPro" id="IPR047621">
    <property type="entry name" value="Ribosomal_L36_bact"/>
</dbReference>
<dbReference type="NCBIfam" id="NF002021">
    <property type="entry name" value="PRK00831.1"/>
    <property type="match status" value="1"/>
</dbReference>
<dbReference type="NCBIfam" id="TIGR01022">
    <property type="entry name" value="rpmJ_bact"/>
    <property type="match status" value="1"/>
</dbReference>
<dbReference type="PANTHER" id="PTHR47781">
    <property type="entry name" value="50S RIBOSOMAL PROTEIN L36 2"/>
    <property type="match status" value="1"/>
</dbReference>
<dbReference type="PANTHER" id="PTHR47781:SF1">
    <property type="entry name" value="LARGE RIBOSOMAL SUBUNIT PROTEIN BL36B"/>
    <property type="match status" value="1"/>
</dbReference>
<dbReference type="Pfam" id="PF00444">
    <property type="entry name" value="Ribosomal_L36"/>
    <property type="match status" value="1"/>
</dbReference>
<dbReference type="SUPFAM" id="SSF57840">
    <property type="entry name" value="Ribosomal protein L36"/>
    <property type="match status" value="1"/>
</dbReference>
<feature type="chain" id="PRO_0000302252" description="Large ribosomal subunit protein bL36">
    <location>
        <begin position="1"/>
        <end position="41"/>
    </location>
</feature>
<protein>
    <recommendedName>
        <fullName evidence="1">Large ribosomal subunit protein bL36</fullName>
    </recommendedName>
    <alternativeName>
        <fullName evidence="2">50S ribosomal protein L36</fullName>
    </alternativeName>
</protein>
<evidence type="ECO:0000255" key="1">
    <source>
        <dbReference type="HAMAP-Rule" id="MF_00251"/>
    </source>
</evidence>
<evidence type="ECO:0000305" key="2"/>
<reference key="1">
    <citation type="submission" date="2003-03" db="EMBL/GenBank/DDBJ databases">
        <title>The complete genome sequence of Neisseria gonorrhoeae.</title>
        <authorList>
            <person name="Lewis L.A."/>
            <person name="Gillaspy A.F."/>
            <person name="McLaughlin R.E."/>
            <person name="Gipson M."/>
            <person name="Ducey T.F."/>
            <person name="Ownbey T."/>
            <person name="Hartman K."/>
            <person name="Nydick C."/>
            <person name="Carson M.B."/>
            <person name="Vaughn J."/>
            <person name="Thomson C."/>
            <person name="Song L."/>
            <person name="Lin S."/>
            <person name="Yuan X."/>
            <person name="Najar F."/>
            <person name="Zhan M."/>
            <person name="Ren Q."/>
            <person name="Zhu H."/>
            <person name="Qi S."/>
            <person name="Kenton S.M."/>
            <person name="Lai H."/>
            <person name="White J.D."/>
            <person name="Clifton S."/>
            <person name="Roe B.A."/>
            <person name="Dyer D.W."/>
        </authorList>
    </citation>
    <scope>NUCLEOTIDE SEQUENCE [LARGE SCALE GENOMIC DNA]</scope>
    <source>
        <strain>ATCC 700825 / FA 1090</strain>
    </source>
</reference>
<sequence length="41" mass="4959">MQVLSSLKTAKQRHRDCQIVRRRGKVYVICKSNPRFKSRQR</sequence>
<proteinExistence type="inferred from homology"/>
<name>RL36_NEIG1</name>
<organism>
    <name type="scientific">Neisseria gonorrhoeae (strain ATCC 700825 / FA 1090)</name>
    <dbReference type="NCBI Taxonomy" id="242231"/>
    <lineage>
        <taxon>Bacteria</taxon>
        <taxon>Pseudomonadati</taxon>
        <taxon>Pseudomonadota</taxon>
        <taxon>Betaproteobacteria</taxon>
        <taxon>Neisseriales</taxon>
        <taxon>Neisseriaceae</taxon>
        <taxon>Neisseria</taxon>
    </lineage>
</organism>
<gene>
    <name evidence="1" type="primary">rpmJ</name>
    <name type="ordered locus">NGO_0931</name>
</gene>
<accession>Q5F860</accession>